<dbReference type="EMBL" id="CP000507">
    <property type="protein sequence ID" value="ABL99821.1"/>
    <property type="molecule type" value="Genomic_DNA"/>
</dbReference>
<dbReference type="RefSeq" id="WP_011759729.1">
    <property type="nucleotide sequence ID" value="NC_008700.1"/>
</dbReference>
<dbReference type="SMR" id="A1S615"/>
<dbReference type="STRING" id="326297.Sama_1614"/>
<dbReference type="KEGG" id="saz:Sama_1614"/>
<dbReference type="eggNOG" id="COG1825">
    <property type="taxonomic scope" value="Bacteria"/>
</dbReference>
<dbReference type="HOGENOM" id="CLU_137946_0_0_6"/>
<dbReference type="OrthoDB" id="9806411at2"/>
<dbReference type="Proteomes" id="UP000009175">
    <property type="component" value="Chromosome"/>
</dbReference>
<dbReference type="GO" id="GO:0022625">
    <property type="term" value="C:cytosolic large ribosomal subunit"/>
    <property type="evidence" value="ECO:0007669"/>
    <property type="project" value="TreeGrafter"/>
</dbReference>
<dbReference type="GO" id="GO:0008097">
    <property type="term" value="F:5S rRNA binding"/>
    <property type="evidence" value="ECO:0007669"/>
    <property type="project" value="InterPro"/>
</dbReference>
<dbReference type="GO" id="GO:0003735">
    <property type="term" value="F:structural constituent of ribosome"/>
    <property type="evidence" value="ECO:0007669"/>
    <property type="project" value="InterPro"/>
</dbReference>
<dbReference type="GO" id="GO:0006412">
    <property type="term" value="P:translation"/>
    <property type="evidence" value="ECO:0007669"/>
    <property type="project" value="UniProtKB-UniRule"/>
</dbReference>
<dbReference type="CDD" id="cd00495">
    <property type="entry name" value="Ribosomal_L25_TL5_CTC"/>
    <property type="match status" value="1"/>
</dbReference>
<dbReference type="FunFam" id="2.40.240.10:FF:000002">
    <property type="entry name" value="50S ribosomal protein L25"/>
    <property type="match status" value="1"/>
</dbReference>
<dbReference type="Gene3D" id="2.40.240.10">
    <property type="entry name" value="Ribosomal Protein L25, Chain P"/>
    <property type="match status" value="1"/>
</dbReference>
<dbReference type="HAMAP" id="MF_01336">
    <property type="entry name" value="Ribosomal_bL25"/>
    <property type="match status" value="1"/>
</dbReference>
<dbReference type="InterPro" id="IPR020056">
    <property type="entry name" value="Rbsml_bL25/Gln-tRNA_synth_N"/>
</dbReference>
<dbReference type="InterPro" id="IPR011035">
    <property type="entry name" value="Ribosomal_bL25/Gln-tRNA_synth"/>
</dbReference>
<dbReference type="InterPro" id="IPR001021">
    <property type="entry name" value="Ribosomal_bL25_long"/>
</dbReference>
<dbReference type="InterPro" id="IPR020055">
    <property type="entry name" value="Ribosomal_bL25_short"/>
</dbReference>
<dbReference type="InterPro" id="IPR029751">
    <property type="entry name" value="Ribosomal_L25_dom"/>
</dbReference>
<dbReference type="InterPro" id="IPR020930">
    <property type="entry name" value="Ribosomal_uL5_bac-type"/>
</dbReference>
<dbReference type="NCBIfam" id="TIGR00731">
    <property type="entry name" value="bL25_bact_ctc"/>
    <property type="match status" value="1"/>
</dbReference>
<dbReference type="NCBIfam" id="NF004612">
    <property type="entry name" value="PRK05943.1"/>
    <property type="match status" value="1"/>
</dbReference>
<dbReference type="PANTHER" id="PTHR33284">
    <property type="entry name" value="RIBOSOMAL PROTEIN L25/GLN-TRNA SYNTHETASE, ANTI-CODON-BINDING DOMAIN-CONTAINING PROTEIN"/>
    <property type="match status" value="1"/>
</dbReference>
<dbReference type="PANTHER" id="PTHR33284:SF1">
    <property type="entry name" value="RIBOSOMAL PROTEIN L25_GLN-TRNA SYNTHETASE, ANTI-CODON-BINDING DOMAIN-CONTAINING PROTEIN"/>
    <property type="match status" value="1"/>
</dbReference>
<dbReference type="Pfam" id="PF01386">
    <property type="entry name" value="Ribosomal_L25p"/>
    <property type="match status" value="1"/>
</dbReference>
<dbReference type="SUPFAM" id="SSF50715">
    <property type="entry name" value="Ribosomal protein L25-like"/>
    <property type="match status" value="1"/>
</dbReference>
<sequence length="95" mass="10749">MSYTIPAQTRTEIGKGSSRRLRREGKVPAVIYGVGKEPVSIVFDHKDIINIQANDDFYTSVLTIVLDGKEVNVRAQAMQRHVFKPMIDHVDFVYA</sequence>
<comment type="function">
    <text evidence="1">This is one of the proteins that binds to the 5S RNA in the ribosome where it forms part of the central protuberance.</text>
</comment>
<comment type="subunit">
    <text evidence="1">Part of the 50S ribosomal subunit; part of the 5S rRNA/L5/L18/L25 subcomplex. Contacts the 5S rRNA. Binds to the 5S rRNA independently of L5 and L18.</text>
</comment>
<comment type="similarity">
    <text evidence="1">Belongs to the bacterial ribosomal protein bL25 family.</text>
</comment>
<reference key="1">
    <citation type="submission" date="2006-12" db="EMBL/GenBank/DDBJ databases">
        <title>Complete sequence of Shewanella amazonensis SB2B.</title>
        <authorList>
            <consortium name="US DOE Joint Genome Institute"/>
            <person name="Copeland A."/>
            <person name="Lucas S."/>
            <person name="Lapidus A."/>
            <person name="Barry K."/>
            <person name="Detter J.C."/>
            <person name="Glavina del Rio T."/>
            <person name="Hammon N."/>
            <person name="Israni S."/>
            <person name="Dalin E."/>
            <person name="Tice H."/>
            <person name="Pitluck S."/>
            <person name="Munk A.C."/>
            <person name="Brettin T."/>
            <person name="Bruce D."/>
            <person name="Han C."/>
            <person name="Tapia R."/>
            <person name="Gilna P."/>
            <person name="Schmutz J."/>
            <person name="Larimer F."/>
            <person name="Land M."/>
            <person name="Hauser L."/>
            <person name="Kyrpides N."/>
            <person name="Mikhailova N."/>
            <person name="Fredrickson J."/>
            <person name="Richardson P."/>
        </authorList>
    </citation>
    <scope>NUCLEOTIDE SEQUENCE [LARGE SCALE GENOMIC DNA]</scope>
    <source>
        <strain>ATCC BAA-1098 / SB2B</strain>
    </source>
</reference>
<proteinExistence type="inferred from homology"/>
<keyword id="KW-1185">Reference proteome</keyword>
<keyword id="KW-0687">Ribonucleoprotein</keyword>
<keyword id="KW-0689">Ribosomal protein</keyword>
<keyword id="KW-0694">RNA-binding</keyword>
<keyword id="KW-0699">rRNA-binding</keyword>
<organism>
    <name type="scientific">Shewanella amazonensis (strain ATCC BAA-1098 / SB2B)</name>
    <dbReference type="NCBI Taxonomy" id="326297"/>
    <lineage>
        <taxon>Bacteria</taxon>
        <taxon>Pseudomonadati</taxon>
        <taxon>Pseudomonadota</taxon>
        <taxon>Gammaproteobacteria</taxon>
        <taxon>Alteromonadales</taxon>
        <taxon>Shewanellaceae</taxon>
        <taxon>Shewanella</taxon>
    </lineage>
</organism>
<gene>
    <name evidence="1" type="primary">rplY</name>
    <name type="ordered locus">Sama_1614</name>
</gene>
<protein>
    <recommendedName>
        <fullName evidence="1">Large ribosomal subunit protein bL25</fullName>
    </recommendedName>
    <alternativeName>
        <fullName evidence="2">50S ribosomal protein L25</fullName>
    </alternativeName>
</protein>
<accession>A1S615</accession>
<evidence type="ECO:0000255" key="1">
    <source>
        <dbReference type="HAMAP-Rule" id="MF_01336"/>
    </source>
</evidence>
<evidence type="ECO:0000305" key="2"/>
<feature type="chain" id="PRO_1000052961" description="Large ribosomal subunit protein bL25">
    <location>
        <begin position="1"/>
        <end position="95"/>
    </location>
</feature>
<name>RL25_SHEAM</name>